<gene>
    <name evidence="1" type="primary">eif-3.G</name>
    <name evidence="5" type="ORF">F22B5.2</name>
</gene>
<comment type="function">
    <text evidence="1 3">RNA-binding component of the eukaryotic translation initiation factor 3 (eIF-3) complex, which is involved in protein synthesis of a specialized repertoire of mRNAs and, together with other initiation factors, stimulates binding of mRNA and methionyl-tRNAi to the 40S ribosome. The eIF-3 complex specifically targets and initiates translation of a subset of mRNAs involved in cell proliferation. This subunit can bind 18S rRNA. Binds to GC-rich 5'UTRs in cholinergic motor neurons, thereby may play a role in translational regulation of mRNAs involved in neuropeptide signaling and stress response, including hlh-30 isoform d and ncs-2 (PubMed:34323215).</text>
</comment>
<comment type="subunit">
    <text evidence="1">Component of the eukaryotic translation initiation factor 3 (eIF-3) complex.</text>
</comment>
<comment type="subcellular location">
    <subcellularLocation>
        <location evidence="1 3">Cytoplasm</location>
    </subcellularLocation>
</comment>
<comment type="alternative products">
    <event type="alternative splicing"/>
    <isoform>
        <id>Q19706-1</id>
        <name evidence="5">a</name>
        <sequence type="displayed"/>
    </isoform>
    <isoform>
        <id>Q19706-2</id>
        <name evidence="6">b</name>
        <sequence type="described" ref="VSP_056763"/>
    </isoform>
</comment>
<comment type="disruption phenotype">
    <text evidence="2">Abnormal morphology (dumpy phenotype), slow growth, sterile and in severe cases embryonic lethal.</text>
</comment>
<comment type="similarity">
    <text evidence="1">Belongs to the eIF-3 subunit G family.</text>
</comment>
<accession>Q19706</accession>
<accession>K8ESE1</accession>
<reference key="1">
    <citation type="journal article" date="1998" name="Science">
        <title>Genome sequence of the nematode C. elegans: a platform for investigating biology.</title>
        <authorList>
            <consortium name="The C. elegans sequencing consortium"/>
        </authorList>
    </citation>
    <scope>NUCLEOTIDE SEQUENCE [LARGE SCALE GENOMIC DNA]</scope>
    <scope>ALTERNATIVE SPLICING</scope>
    <source>
        <strain>Bristol N2</strain>
    </source>
</reference>
<reference key="2">
    <citation type="journal article" date="2003" name="Nature">
        <title>Systematic functional analysis of the Caenorhabditis elegans genome using RNAi.</title>
        <authorList>
            <person name="Kamath R.S."/>
            <person name="Fraser A.G."/>
            <person name="Dong Y."/>
            <person name="Poulin G."/>
            <person name="Durbin R."/>
            <person name="Gotta M."/>
            <person name="Kanapin A."/>
            <person name="Le Bot N."/>
            <person name="Moreno S."/>
            <person name="Sohrmann M."/>
            <person name="Welchman D.P."/>
            <person name="Zipperlen P."/>
            <person name="Ahringer J."/>
        </authorList>
    </citation>
    <scope>DISRUPTION PHENOTYPE</scope>
</reference>
<reference key="3">
    <citation type="journal article" date="2021" name="Elife">
        <title>Eukaryotic initiation factor EIF-3.G augments mRNA translation efficiency to regulate neuronal activity.</title>
        <authorList>
            <person name="Blazie S.M."/>
            <person name="Takayanagi-Kiya S."/>
            <person name="McCulloch K.A."/>
            <person name="Jin Y."/>
        </authorList>
    </citation>
    <scope>FUNCTION</scope>
    <scope>SUBCELLULAR LOCATION</scope>
    <scope>MUTAGENESIS OF CYS-127 AND CYS-130</scope>
</reference>
<sequence length="262" mass="29877">MTGINAMAPAPEVVSWAEAVEQDNAPHIQEGADGTRTETAFTEVDGVRWKVVTQFKVINKRVPKVVADRKKWVKFGSCKGEPAGPQVATTYVAEEVDMQFTRNRAGEQILDVQEDKQTAKTTSREHCRHCKGNDHWSTHCPYKVMYQLDEEADADKDTEKDRMAMGMRPDGRQIDRNRSDENTCRVTNLPQEMNEDELRDLFGKIGRVIRIFIARDKVTGLPKGFAFVTFESRDDAARAIAELNDIRMYHMVLKVEWTRPSN</sequence>
<name>EIF3G_CAEEL</name>
<organism>
    <name type="scientific">Caenorhabditis elegans</name>
    <dbReference type="NCBI Taxonomy" id="6239"/>
    <lineage>
        <taxon>Eukaryota</taxon>
        <taxon>Metazoa</taxon>
        <taxon>Ecdysozoa</taxon>
        <taxon>Nematoda</taxon>
        <taxon>Chromadorea</taxon>
        <taxon>Rhabditida</taxon>
        <taxon>Rhabditina</taxon>
        <taxon>Rhabditomorpha</taxon>
        <taxon>Rhabditoidea</taxon>
        <taxon>Rhabditidae</taxon>
        <taxon>Peloderinae</taxon>
        <taxon>Caenorhabditis</taxon>
    </lineage>
</organism>
<proteinExistence type="evidence at protein level"/>
<dbReference type="EMBL" id="BX284602">
    <property type="protein sequence ID" value="CAA90354.1"/>
    <property type="molecule type" value="Genomic_DNA"/>
</dbReference>
<dbReference type="EMBL" id="BX284602">
    <property type="protein sequence ID" value="CCO25605.1"/>
    <property type="molecule type" value="Genomic_DNA"/>
</dbReference>
<dbReference type="PIR" id="T21238">
    <property type="entry name" value="T21238"/>
</dbReference>
<dbReference type="RefSeq" id="NP_001263666.1">
    <molecule id="Q19706-1"/>
    <property type="nucleotide sequence ID" value="NM_001276737.3"/>
</dbReference>
<dbReference type="RefSeq" id="NP_495778.1">
    <molecule id="Q19706-2"/>
    <property type="nucleotide sequence ID" value="NM_063377.5"/>
</dbReference>
<dbReference type="SMR" id="Q19706"/>
<dbReference type="BioGRID" id="39675">
    <property type="interactions" value="21"/>
</dbReference>
<dbReference type="FunCoup" id="Q19706">
    <property type="interactions" value="2615"/>
</dbReference>
<dbReference type="IntAct" id="Q19706">
    <property type="interactions" value="1"/>
</dbReference>
<dbReference type="STRING" id="6239.F22B5.2a.1"/>
<dbReference type="PaxDb" id="6239-F22B5.2a"/>
<dbReference type="PeptideAtlas" id="Q19706"/>
<dbReference type="EnsemblMetazoa" id="F22B5.2a.1">
    <molecule id="Q19706-1"/>
    <property type="protein sequence ID" value="F22B5.2a.1"/>
    <property type="gene ID" value="WBGene00001230"/>
</dbReference>
<dbReference type="EnsemblMetazoa" id="F22B5.2b.1">
    <molecule id="Q19706-2"/>
    <property type="protein sequence ID" value="F22B5.2b.1"/>
    <property type="gene ID" value="WBGene00001230"/>
</dbReference>
<dbReference type="GeneID" id="174346"/>
<dbReference type="KEGG" id="cel:CELE_F22B5.2"/>
<dbReference type="AGR" id="WB:WBGene00001230"/>
<dbReference type="CTD" id="174346"/>
<dbReference type="WormBase" id="F22B5.2a">
    <molecule id="Q19706-1"/>
    <property type="protein sequence ID" value="CE47869"/>
    <property type="gene ID" value="WBGene00001230"/>
    <property type="gene designation" value="eif-3.G"/>
</dbReference>
<dbReference type="WormBase" id="F22B5.2b">
    <molecule id="Q19706-2"/>
    <property type="protein sequence ID" value="CE02197"/>
    <property type="gene ID" value="WBGene00001230"/>
    <property type="gene designation" value="eif-3.G"/>
</dbReference>
<dbReference type="eggNOG" id="KOG0122">
    <property type="taxonomic scope" value="Eukaryota"/>
</dbReference>
<dbReference type="GeneTree" id="ENSGT00510000047802"/>
<dbReference type="InParanoid" id="Q19706"/>
<dbReference type="OMA" id="IVNPYPN"/>
<dbReference type="OrthoDB" id="2011769at2759"/>
<dbReference type="PhylomeDB" id="Q19706"/>
<dbReference type="Reactome" id="R-CEL-156827">
    <property type="pathway name" value="L13a-mediated translational silencing of Ceruloplasmin expression"/>
</dbReference>
<dbReference type="Reactome" id="R-CEL-72649">
    <property type="pathway name" value="Translation initiation complex formation"/>
</dbReference>
<dbReference type="Reactome" id="R-CEL-72689">
    <property type="pathway name" value="Formation of a pool of free 40S subunits"/>
</dbReference>
<dbReference type="Reactome" id="R-CEL-72695">
    <property type="pathway name" value="Formation of the ternary complex, and subsequently, the 43S complex"/>
</dbReference>
<dbReference type="Reactome" id="R-CEL-72702">
    <property type="pathway name" value="Ribosomal scanning and start codon recognition"/>
</dbReference>
<dbReference type="PRO" id="PR:Q19706"/>
<dbReference type="Proteomes" id="UP000001940">
    <property type="component" value="Chromosome II"/>
</dbReference>
<dbReference type="Bgee" id="WBGene00001230">
    <property type="expression patterns" value="Expressed in larva and 4 other cell types or tissues"/>
</dbReference>
<dbReference type="GO" id="GO:0005737">
    <property type="term" value="C:cytoplasm"/>
    <property type="evidence" value="ECO:0000314"/>
    <property type="project" value="UniProtKB"/>
</dbReference>
<dbReference type="GO" id="GO:0016282">
    <property type="term" value="C:eukaryotic 43S preinitiation complex"/>
    <property type="evidence" value="ECO:0007669"/>
    <property type="project" value="UniProtKB-UniRule"/>
</dbReference>
<dbReference type="GO" id="GO:0033290">
    <property type="term" value="C:eukaryotic 48S preinitiation complex"/>
    <property type="evidence" value="ECO:0007669"/>
    <property type="project" value="UniProtKB-UniRule"/>
</dbReference>
<dbReference type="GO" id="GO:0005852">
    <property type="term" value="C:eukaryotic translation initiation factor 3 complex"/>
    <property type="evidence" value="ECO:0007669"/>
    <property type="project" value="UniProtKB-UniRule"/>
</dbReference>
<dbReference type="GO" id="GO:0048027">
    <property type="term" value="F:mRNA 5'-UTR binding"/>
    <property type="evidence" value="ECO:0000314"/>
    <property type="project" value="UniProtKB"/>
</dbReference>
<dbReference type="GO" id="GO:0003743">
    <property type="term" value="F:translation initiation factor activity"/>
    <property type="evidence" value="ECO:0007669"/>
    <property type="project" value="UniProtKB-UniRule"/>
</dbReference>
<dbReference type="GO" id="GO:0001732">
    <property type="term" value="P:formation of cytoplasmic translation initiation complex"/>
    <property type="evidence" value="ECO:0007669"/>
    <property type="project" value="UniProtKB-UniRule"/>
</dbReference>
<dbReference type="GO" id="GO:0045727">
    <property type="term" value="P:positive regulation of translation"/>
    <property type="evidence" value="ECO:0000314"/>
    <property type="project" value="UniProtKB"/>
</dbReference>
<dbReference type="CDD" id="cd12933">
    <property type="entry name" value="eIF3G"/>
    <property type="match status" value="1"/>
</dbReference>
<dbReference type="CDD" id="cd12408">
    <property type="entry name" value="RRM_eIF3G_like"/>
    <property type="match status" value="1"/>
</dbReference>
<dbReference type="FunFam" id="3.30.70.330:FF:001019">
    <property type="entry name" value="Eukaryotic translation initiation factor 3 subunit G"/>
    <property type="match status" value="1"/>
</dbReference>
<dbReference type="Gene3D" id="3.30.70.330">
    <property type="match status" value="1"/>
</dbReference>
<dbReference type="HAMAP" id="MF_03006">
    <property type="entry name" value="eIF3g"/>
    <property type="match status" value="1"/>
</dbReference>
<dbReference type="InterPro" id="IPR017334">
    <property type="entry name" value="eIF3_g"/>
</dbReference>
<dbReference type="InterPro" id="IPR024675">
    <property type="entry name" value="eIF3g_N"/>
</dbReference>
<dbReference type="InterPro" id="IPR034240">
    <property type="entry name" value="eIF3G_RRM"/>
</dbReference>
<dbReference type="InterPro" id="IPR012677">
    <property type="entry name" value="Nucleotide-bd_a/b_plait_sf"/>
</dbReference>
<dbReference type="InterPro" id="IPR035979">
    <property type="entry name" value="RBD_domain_sf"/>
</dbReference>
<dbReference type="InterPro" id="IPR000504">
    <property type="entry name" value="RRM_dom"/>
</dbReference>
<dbReference type="PANTHER" id="PTHR10352">
    <property type="entry name" value="EUKARYOTIC TRANSLATION INITIATION FACTOR 3 SUBUNIT G"/>
    <property type="match status" value="1"/>
</dbReference>
<dbReference type="Pfam" id="PF12353">
    <property type="entry name" value="eIF3g"/>
    <property type="match status" value="1"/>
</dbReference>
<dbReference type="Pfam" id="PF00076">
    <property type="entry name" value="RRM_1"/>
    <property type="match status" value="1"/>
</dbReference>
<dbReference type="PIRSF" id="PIRSF037949">
    <property type="entry name" value="Transl_init_eIF-3_RNA-bind"/>
    <property type="match status" value="1"/>
</dbReference>
<dbReference type="SMART" id="SM00360">
    <property type="entry name" value="RRM"/>
    <property type="match status" value="1"/>
</dbReference>
<dbReference type="SUPFAM" id="SSF54928">
    <property type="entry name" value="RNA-binding domain, RBD"/>
    <property type="match status" value="1"/>
</dbReference>
<dbReference type="PROSITE" id="PS50102">
    <property type="entry name" value="RRM"/>
    <property type="match status" value="1"/>
</dbReference>
<keyword id="KW-0025">Alternative splicing</keyword>
<keyword id="KW-0963">Cytoplasm</keyword>
<keyword id="KW-0396">Initiation factor</keyword>
<keyword id="KW-0648">Protein biosynthesis</keyword>
<keyword id="KW-1185">Reference proteome</keyword>
<keyword id="KW-0694">RNA-binding</keyword>
<evidence type="ECO:0000255" key="1">
    <source>
        <dbReference type="HAMAP-Rule" id="MF_03006"/>
    </source>
</evidence>
<evidence type="ECO:0000269" key="2">
    <source>
    </source>
</evidence>
<evidence type="ECO:0000269" key="3">
    <source>
    </source>
</evidence>
<evidence type="ECO:0000305" key="4"/>
<evidence type="ECO:0000312" key="5">
    <source>
        <dbReference type="WormBase" id="F22B5.2a"/>
    </source>
</evidence>
<evidence type="ECO:0000312" key="6">
    <source>
        <dbReference type="WormBase" id="F22B5.2b"/>
    </source>
</evidence>
<feature type="chain" id="PRO_0000123512" description="Eukaryotic translation initiation factor 3 subunit G">
    <location>
        <begin position="1"/>
        <end position="262"/>
    </location>
</feature>
<feature type="domain" description="RRM" evidence="1">
    <location>
        <begin position="182"/>
        <end position="260"/>
    </location>
</feature>
<feature type="splice variant" id="VSP_056763" description="In isoform b." evidence="4">
    <location>
        <begin position="1"/>
        <end position="6"/>
    </location>
</feature>
<feature type="mutagenesis site" description="In ju1840; represses the convulsive behavior due to cholinergic hyperexcitation caused by an acr-2 mutant." evidence="3">
    <original>C</original>
    <variation>Y</variation>
    <location>
        <position position="127"/>
    </location>
</feature>
<feature type="mutagenesis site" description="In ju807; represses the convulsive behavior due to cholinergic hyperexcitation caused by an acr-2 mutant. No effect on binding to target 5-UTRs." evidence="3">
    <original>C</original>
    <variation>Y</variation>
    <location>
        <position position="130"/>
    </location>
</feature>
<protein>
    <recommendedName>
        <fullName evidence="1">Eukaryotic translation initiation factor 3 subunit G</fullName>
        <shortName evidence="1">eIF3g</shortName>
    </recommendedName>
    <alternativeName>
        <fullName evidence="1">Eukaryotic translation initiation factor 3 RNA-binding subunit</fullName>
        <shortName evidence="1">eIF-3 RNA-binding subunit</shortName>
    </alternativeName>
    <alternativeName>
        <fullName evidence="1">Eukaryotic translation initiation factor 3 subunit 4</fullName>
    </alternativeName>
</protein>